<comment type="function">
    <text evidence="1">Produces ATP from ADP in the presence of a proton gradient across the membrane. The catalytic sites are hosted primarily by the beta subunits.</text>
</comment>
<comment type="catalytic activity">
    <reaction evidence="1">
        <text>ATP + H2O + 4 H(+)(in) = ADP + phosphate + 5 H(+)(out)</text>
        <dbReference type="Rhea" id="RHEA:57720"/>
        <dbReference type="ChEBI" id="CHEBI:15377"/>
        <dbReference type="ChEBI" id="CHEBI:15378"/>
        <dbReference type="ChEBI" id="CHEBI:30616"/>
        <dbReference type="ChEBI" id="CHEBI:43474"/>
        <dbReference type="ChEBI" id="CHEBI:456216"/>
        <dbReference type="EC" id="7.1.2.2"/>
    </reaction>
</comment>
<comment type="subunit">
    <text evidence="1">F-type ATPases have 2 components, CF(1) - the catalytic core - and CF(0) - the membrane proton channel. CF(1) has five subunits: alpha(3), beta(3), gamma(1), delta(1), epsilon(1). CF(0) has three main subunits: a(1), b(2) and c(9-12). The alpha and beta chains form an alternating ring which encloses part of the gamma chain. CF(1) is attached to CF(0) by a central stalk formed by the gamma and epsilon chains, while a peripheral stalk is formed by the delta and b chains.</text>
</comment>
<comment type="subcellular location">
    <subcellularLocation>
        <location evidence="1">Cell inner membrane</location>
        <topology evidence="1">Peripheral membrane protein</topology>
    </subcellularLocation>
</comment>
<comment type="similarity">
    <text evidence="1">Belongs to the ATPase alpha/beta chains family.</text>
</comment>
<proteinExistence type="inferred from homology"/>
<feature type="chain" id="PRO_1000143544" description="ATP synthase subunit beta">
    <location>
        <begin position="1"/>
        <end position="460"/>
    </location>
</feature>
<feature type="binding site" evidence="1">
    <location>
        <begin position="150"/>
        <end position="157"/>
    </location>
    <ligand>
        <name>ATP</name>
        <dbReference type="ChEBI" id="CHEBI:30616"/>
    </ligand>
</feature>
<dbReference type="EC" id="7.1.2.2" evidence="1"/>
<dbReference type="EMBL" id="CP001127">
    <property type="protein sequence ID" value="ACF89016.1"/>
    <property type="molecule type" value="Genomic_DNA"/>
</dbReference>
<dbReference type="RefSeq" id="WP_000190499.1">
    <property type="nucleotide sequence ID" value="NC_011094.1"/>
</dbReference>
<dbReference type="SMR" id="B4TN31"/>
<dbReference type="GeneID" id="66758154"/>
<dbReference type="KEGG" id="sew:SeSA_A4075"/>
<dbReference type="HOGENOM" id="CLU_022398_0_2_6"/>
<dbReference type="Proteomes" id="UP000001865">
    <property type="component" value="Chromosome"/>
</dbReference>
<dbReference type="GO" id="GO:0005886">
    <property type="term" value="C:plasma membrane"/>
    <property type="evidence" value="ECO:0007669"/>
    <property type="project" value="UniProtKB-SubCell"/>
</dbReference>
<dbReference type="GO" id="GO:0045259">
    <property type="term" value="C:proton-transporting ATP synthase complex"/>
    <property type="evidence" value="ECO:0007669"/>
    <property type="project" value="UniProtKB-KW"/>
</dbReference>
<dbReference type="GO" id="GO:0005524">
    <property type="term" value="F:ATP binding"/>
    <property type="evidence" value="ECO:0007669"/>
    <property type="project" value="UniProtKB-UniRule"/>
</dbReference>
<dbReference type="GO" id="GO:0016887">
    <property type="term" value="F:ATP hydrolysis activity"/>
    <property type="evidence" value="ECO:0007669"/>
    <property type="project" value="InterPro"/>
</dbReference>
<dbReference type="GO" id="GO:0046933">
    <property type="term" value="F:proton-transporting ATP synthase activity, rotational mechanism"/>
    <property type="evidence" value="ECO:0007669"/>
    <property type="project" value="UniProtKB-UniRule"/>
</dbReference>
<dbReference type="CDD" id="cd18110">
    <property type="entry name" value="ATP-synt_F1_beta_C"/>
    <property type="match status" value="1"/>
</dbReference>
<dbReference type="CDD" id="cd18115">
    <property type="entry name" value="ATP-synt_F1_beta_N"/>
    <property type="match status" value="1"/>
</dbReference>
<dbReference type="CDD" id="cd01133">
    <property type="entry name" value="F1-ATPase_beta_CD"/>
    <property type="match status" value="1"/>
</dbReference>
<dbReference type="FunFam" id="1.10.1140.10:FF:000001">
    <property type="entry name" value="ATP synthase subunit beta"/>
    <property type="match status" value="1"/>
</dbReference>
<dbReference type="FunFam" id="2.40.10.170:FF:000003">
    <property type="entry name" value="ATP synthase subunit beta"/>
    <property type="match status" value="1"/>
</dbReference>
<dbReference type="FunFam" id="3.40.50.300:FF:000004">
    <property type="entry name" value="ATP synthase subunit beta"/>
    <property type="match status" value="1"/>
</dbReference>
<dbReference type="Gene3D" id="2.40.10.170">
    <property type="match status" value="1"/>
</dbReference>
<dbReference type="Gene3D" id="1.10.1140.10">
    <property type="entry name" value="Bovine Mitochondrial F1-atpase, Atp Synthase Beta Chain, Chain D, domain 3"/>
    <property type="match status" value="1"/>
</dbReference>
<dbReference type="Gene3D" id="3.40.50.300">
    <property type="entry name" value="P-loop containing nucleotide triphosphate hydrolases"/>
    <property type="match status" value="1"/>
</dbReference>
<dbReference type="HAMAP" id="MF_01347">
    <property type="entry name" value="ATP_synth_beta_bact"/>
    <property type="match status" value="1"/>
</dbReference>
<dbReference type="InterPro" id="IPR003593">
    <property type="entry name" value="AAA+_ATPase"/>
</dbReference>
<dbReference type="InterPro" id="IPR055190">
    <property type="entry name" value="ATP-synt_VA_C"/>
</dbReference>
<dbReference type="InterPro" id="IPR005722">
    <property type="entry name" value="ATP_synth_F1_bsu"/>
</dbReference>
<dbReference type="InterPro" id="IPR020003">
    <property type="entry name" value="ATPase_a/bsu_AS"/>
</dbReference>
<dbReference type="InterPro" id="IPR050053">
    <property type="entry name" value="ATPase_alpha/beta_chains"/>
</dbReference>
<dbReference type="InterPro" id="IPR004100">
    <property type="entry name" value="ATPase_F1/V1/A1_a/bsu_N"/>
</dbReference>
<dbReference type="InterPro" id="IPR036121">
    <property type="entry name" value="ATPase_F1/V1/A1_a/bsu_N_sf"/>
</dbReference>
<dbReference type="InterPro" id="IPR000194">
    <property type="entry name" value="ATPase_F1/V1/A1_a/bsu_nucl-bd"/>
</dbReference>
<dbReference type="InterPro" id="IPR024034">
    <property type="entry name" value="ATPase_F1/V1_b/a_C"/>
</dbReference>
<dbReference type="InterPro" id="IPR027417">
    <property type="entry name" value="P-loop_NTPase"/>
</dbReference>
<dbReference type="NCBIfam" id="TIGR01039">
    <property type="entry name" value="atpD"/>
    <property type="match status" value="1"/>
</dbReference>
<dbReference type="PANTHER" id="PTHR15184">
    <property type="entry name" value="ATP SYNTHASE"/>
    <property type="match status" value="1"/>
</dbReference>
<dbReference type="PANTHER" id="PTHR15184:SF71">
    <property type="entry name" value="ATP SYNTHASE SUBUNIT BETA, MITOCHONDRIAL"/>
    <property type="match status" value="1"/>
</dbReference>
<dbReference type="Pfam" id="PF00006">
    <property type="entry name" value="ATP-synt_ab"/>
    <property type="match status" value="1"/>
</dbReference>
<dbReference type="Pfam" id="PF02874">
    <property type="entry name" value="ATP-synt_ab_N"/>
    <property type="match status" value="1"/>
</dbReference>
<dbReference type="Pfam" id="PF22919">
    <property type="entry name" value="ATP-synt_VA_C"/>
    <property type="match status" value="1"/>
</dbReference>
<dbReference type="SMART" id="SM00382">
    <property type="entry name" value="AAA"/>
    <property type="match status" value="1"/>
</dbReference>
<dbReference type="SUPFAM" id="SSF47917">
    <property type="entry name" value="C-terminal domain of alpha and beta subunits of F1 ATP synthase"/>
    <property type="match status" value="1"/>
</dbReference>
<dbReference type="SUPFAM" id="SSF50615">
    <property type="entry name" value="N-terminal domain of alpha and beta subunits of F1 ATP synthase"/>
    <property type="match status" value="1"/>
</dbReference>
<dbReference type="SUPFAM" id="SSF52540">
    <property type="entry name" value="P-loop containing nucleoside triphosphate hydrolases"/>
    <property type="match status" value="1"/>
</dbReference>
<dbReference type="PROSITE" id="PS00152">
    <property type="entry name" value="ATPASE_ALPHA_BETA"/>
    <property type="match status" value="1"/>
</dbReference>
<keyword id="KW-0066">ATP synthesis</keyword>
<keyword id="KW-0067">ATP-binding</keyword>
<keyword id="KW-0997">Cell inner membrane</keyword>
<keyword id="KW-1003">Cell membrane</keyword>
<keyword id="KW-0139">CF(1)</keyword>
<keyword id="KW-0375">Hydrogen ion transport</keyword>
<keyword id="KW-0406">Ion transport</keyword>
<keyword id="KW-0472">Membrane</keyword>
<keyword id="KW-0547">Nucleotide-binding</keyword>
<keyword id="KW-1278">Translocase</keyword>
<keyword id="KW-0813">Transport</keyword>
<organism>
    <name type="scientific">Salmonella schwarzengrund (strain CVM19633)</name>
    <dbReference type="NCBI Taxonomy" id="439843"/>
    <lineage>
        <taxon>Bacteria</taxon>
        <taxon>Pseudomonadati</taxon>
        <taxon>Pseudomonadota</taxon>
        <taxon>Gammaproteobacteria</taxon>
        <taxon>Enterobacterales</taxon>
        <taxon>Enterobacteriaceae</taxon>
        <taxon>Salmonella</taxon>
    </lineage>
</organism>
<name>ATPB_SALSV</name>
<gene>
    <name evidence="1" type="primary">atpD</name>
    <name type="ordered locus">SeSA_A4075</name>
</gene>
<accession>B4TN31</accession>
<evidence type="ECO:0000255" key="1">
    <source>
        <dbReference type="HAMAP-Rule" id="MF_01347"/>
    </source>
</evidence>
<protein>
    <recommendedName>
        <fullName evidence="1">ATP synthase subunit beta</fullName>
        <ecNumber evidence="1">7.1.2.2</ecNumber>
    </recommendedName>
    <alternativeName>
        <fullName evidence="1">ATP synthase F1 sector subunit beta</fullName>
    </alternativeName>
    <alternativeName>
        <fullName evidence="1">F-ATPase subunit beta</fullName>
    </alternativeName>
</protein>
<reference key="1">
    <citation type="journal article" date="2011" name="J. Bacteriol.">
        <title>Comparative genomics of 28 Salmonella enterica isolates: evidence for CRISPR-mediated adaptive sublineage evolution.</title>
        <authorList>
            <person name="Fricke W.F."/>
            <person name="Mammel M.K."/>
            <person name="McDermott P.F."/>
            <person name="Tartera C."/>
            <person name="White D.G."/>
            <person name="Leclerc J.E."/>
            <person name="Ravel J."/>
            <person name="Cebula T.A."/>
        </authorList>
    </citation>
    <scope>NUCLEOTIDE SEQUENCE [LARGE SCALE GENOMIC DNA]</scope>
    <source>
        <strain>CVM19633</strain>
    </source>
</reference>
<sequence length="460" mass="50283">MATGKIVQVIGAVVDVEFPQDAVPRVYDALEVQNGNEKLVLEVQQQLGGGIVRTIAMGSSDGLRRGLDVKDLEHPIEVPVGKATLGRIMNVLGEPVDMKGEIGEEERWAIHRAAPSYEELSNSQELLETGIKVIDLMCPFAKGGKVGLFGGAGVGKTVNMMELIRNIAIEHSGYSVFAGVGERTREGNDFYHEMTDSNVIDKVSLVYGQMNEPPGNRLRVALTGLTMAEKFRDEGRDVLLFVDNIYRYTLAGTEVSALLGRMPSAVGYQPTLAEEMGVLQERITSTKTGSITSVQAVYVPADDLTDPSPATTFAHLDATVVLSRQIASLGIYPAVDPLDSTSRQLDPLVVGQEHYDTARGVQSILQRYQELKDIIAILGMDELSEEDKLVVARARKIQRFLSQPFFVAEVFTGSPGKYVSLKDTIRGFKGIMEGEYDHLPEQAFYMVGSIDEAVEKAKKL</sequence>